<protein>
    <recommendedName>
        <fullName>Probable cutinase 1</fullName>
        <ecNumber evidence="5 6">3.1.1.74</ecNumber>
    </recommendedName>
    <alternativeName>
        <fullName>Cutin hydrolase 1</fullName>
    </alternativeName>
</protein>
<keyword id="KW-1015">Disulfide bond</keyword>
<keyword id="KW-0325">Glycoprotein</keyword>
<keyword id="KW-0378">Hydrolase</keyword>
<keyword id="KW-1185">Reference proteome</keyword>
<keyword id="KW-0964">Secreted</keyword>
<keyword id="KW-0719">Serine esterase</keyword>
<keyword id="KW-0732">Signal</keyword>
<gene>
    <name type="ORF">NFIA_084890</name>
</gene>
<evidence type="ECO:0000250" key="1">
    <source>
        <dbReference type="UniProtKB" id="P00590"/>
    </source>
</evidence>
<evidence type="ECO:0000250" key="2">
    <source>
        <dbReference type="UniProtKB" id="P11373"/>
    </source>
</evidence>
<evidence type="ECO:0000250" key="3">
    <source>
        <dbReference type="UniProtKB" id="P52956"/>
    </source>
</evidence>
<evidence type="ECO:0000255" key="4"/>
<evidence type="ECO:0000255" key="5">
    <source>
        <dbReference type="PROSITE-ProRule" id="PRU10108"/>
    </source>
</evidence>
<evidence type="ECO:0000255" key="6">
    <source>
        <dbReference type="PROSITE-ProRule" id="PRU10109"/>
    </source>
</evidence>
<evidence type="ECO:0000305" key="7"/>
<dbReference type="EC" id="3.1.1.74" evidence="5 6"/>
<dbReference type="EMBL" id="DS027696">
    <property type="protein sequence ID" value="EAW18537.1"/>
    <property type="molecule type" value="Genomic_DNA"/>
</dbReference>
<dbReference type="RefSeq" id="XP_001260434.1">
    <property type="nucleotide sequence ID" value="XM_001260433.1"/>
</dbReference>
<dbReference type="SMR" id="A1DGN0"/>
<dbReference type="STRING" id="331117.A1DGN0"/>
<dbReference type="ESTHER" id="aspfu-q4x1n0">
    <property type="family name" value="Cutinase"/>
</dbReference>
<dbReference type="EnsemblFungi" id="EAW18537">
    <property type="protein sequence ID" value="EAW18537"/>
    <property type="gene ID" value="NFIA_084890"/>
</dbReference>
<dbReference type="GeneID" id="4586992"/>
<dbReference type="KEGG" id="nfi:NFIA_084890"/>
<dbReference type="VEuPathDB" id="FungiDB:NFIA_084890"/>
<dbReference type="eggNOG" id="ENOG502SI38">
    <property type="taxonomic scope" value="Eukaryota"/>
</dbReference>
<dbReference type="HOGENOM" id="CLU_040058_2_0_1"/>
<dbReference type="OMA" id="CEPITFI"/>
<dbReference type="OrthoDB" id="3225429at2759"/>
<dbReference type="Proteomes" id="UP000006702">
    <property type="component" value="Unassembled WGS sequence"/>
</dbReference>
<dbReference type="GO" id="GO:0005576">
    <property type="term" value="C:extracellular region"/>
    <property type="evidence" value="ECO:0007669"/>
    <property type="project" value="UniProtKB-SubCell"/>
</dbReference>
<dbReference type="GO" id="GO:0050525">
    <property type="term" value="F:cutinase activity"/>
    <property type="evidence" value="ECO:0000250"/>
    <property type="project" value="UniProtKB"/>
</dbReference>
<dbReference type="GO" id="GO:0016052">
    <property type="term" value="P:carbohydrate catabolic process"/>
    <property type="evidence" value="ECO:0007669"/>
    <property type="project" value="TreeGrafter"/>
</dbReference>
<dbReference type="FunFam" id="3.40.50.1820:FF:000235">
    <property type="entry name" value="Cutinase 1"/>
    <property type="match status" value="1"/>
</dbReference>
<dbReference type="Gene3D" id="3.40.50.1820">
    <property type="entry name" value="alpha/beta hydrolase"/>
    <property type="match status" value="1"/>
</dbReference>
<dbReference type="InterPro" id="IPR029058">
    <property type="entry name" value="AB_hydrolase_fold"/>
</dbReference>
<dbReference type="InterPro" id="IPR000675">
    <property type="entry name" value="Cutinase/axe"/>
</dbReference>
<dbReference type="InterPro" id="IPR043580">
    <property type="entry name" value="CUTINASE_1"/>
</dbReference>
<dbReference type="InterPro" id="IPR043579">
    <property type="entry name" value="CUTINASE_2"/>
</dbReference>
<dbReference type="InterPro" id="IPR011150">
    <property type="entry name" value="Cutinase_monf"/>
</dbReference>
<dbReference type="PANTHER" id="PTHR48250:SF3">
    <property type="entry name" value="CUTINASE 1-RELATED"/>
    <property type="match status" value="1"/>
</dbReference>
<dbReference type="PANTHER" id="PTHR48250">
    <property type="entry name" value="CUTINASE 2-RELATED"/>
    <property type="match status" value="1"/>
</dbReference>
<dbReference type="Pfam" id="PF01083">
    <property type="entry name" value="Cutinase"/>
    <property type="match status" value="1"/>
</dbReference>
<dbReference type="PRINTS" id="PR00129">
    <property type="entry name" value="CUTINASE"/>
</dbReference>
<dbReference type="SMART" id="SM01110">
    <property type="entry name" value="Cutinase"/>
    <property type="match status" value="1"/>
</dbReference>
<dbReference type="SUPFAM" id="SSF53474">
    <property type="entry name" value="alpha/beta-Hydrolases"/>
    <property type="match status" value="1"/>
</dbReference>
<dbReference type="PROSITE" id="PS00155">
    <property type="entry name" value="CUTINASE_1"/>
    <property type="match status" value="1"/>
</dbReference>
<dbReference type="PROSITE" id="PS00931">
    <property type="entry name" value="CUTINASE_2"/>
    <property type="match status" value="1"/>
</dbReference>
<comment type="function">
    <text evidence="1">Catalyzes the hydrolysis of complex carboxylic polyesters found in the cell wall of plants (By similarity). Degrades cutin, a macromolecule that forms the structure of the plant cuticle (By similarity).</text>
</comment>
<comment type="catalytic activity">
    <reaction evidence="5 6">
        <text>cutin + H2O = cutin monomers.</text>
        <dbReference type="EC" id="3.1.1.74"/>
    </reaction>
</comment>
<comment type="subcellular location">
    <subcellularLocation>
        <location evidence="2">Secreted</location>
    </subcellularLocation>
</comment>
<comment type="similarity">
    <text evidence="7">Belongs to the cutinase family.</text>
</comment>
<reference key="1">
    <citation type="journal article" date="2008" name="PLoS Genet.">
        <title>Genomic islands in the pathogenic filamentous fungus Aspergillus fumigatus.</title>
        <authorList>
            <person name="Fedorova N.D."/>
            <person name="Khaldi N."/>
            <person name="Joardar V.S."/>
            <person name="Maiti R."/>
            <person name="Amedeo P."/>
            <person name="Anderson M.J."/>
            <person name="Crabtree J."/>
            <person name="Silva J.C."/>
            <person name="Badger J.H."/>
            <person name="Albarraq A."/>
            <person name="Angiuoli S."/>
            <person name="Bussey H."/>
            <person name="Bowyer P."/>
            <person name="Cotty P.J."/>
            <person name="Dyer P.S."/>
            <person name="Egan A."/>
            <person name="Galens K."/>
            <person name="Fraser-Liggett C.M."/>
            <person name="Haas B.J."/>
            <person name="Inman J.M."/>
            <person name="Kent R."/>
            <person name="Lemieux S."/>
            <person name="Malavazi I."/>
            <person name="Orvis J."/>
            <person name="Roemer T."/>
            <person name="Ronning C.M."/>
            <person name="Sundaram J.P."/>
            <person name="Sutton G."/>
            <person name="Turner G."/>
            <person name="Venter J.C."/>
            <person name="White O.R."/>
            <person name="Whitty B.R."/>
            <person name="Youngman P."/>
            <person name="Wolfe K.H."/>
            <person name="Goldman G.H."/>
            <person name="Wortman J.R."/>
            <person name="Jiang B."/>
            <person name="Denning D.W."/>
            <person name="Nierman W.C."/>
        </authorList>
    </citation>
    <scope>NUCLEOTIDE SEQUENCE [LARGE SCALE GENOMIC DNA]</scope>
    <source>
        <strain>ATCC 1020 / DSM 3700 / CBS 544.65 / FGSC A1164 / JCM 1740 / NRRL 181 / WB 181</strain>
    </source>
</reference>
<accession>A1DGN0</accession>
<feature type="signal peptide" evidence="4">
    <location>
        <begin position="1"/>
        <end position="18"/>
    </location>
</feature>
<feature type="chain" id="PRO_0000395263" description="Probable cutinase 1">
    <location>
        <begin position="19"/>
        <end position="211"/>
    </location>
</feature>
<feature type="active site" description="Nucleophile" evidence="1">
    <location>
        <position position="125"/>
    </location>
</feature>
<feature type="active site" evidence="1">
    <location>
        <position position="180"/>
    </location>
</feature>
<feature type="active site" description="Proton donor/acceptor" evidence="1">
    <location>
        <position position="193"/>
    </location>
</feature>
<feature type="site" description="Transition state stabilizer" evidence="1">
    <location>
        <position position="47"/>
    </location>
</feature>
<feature type="site" description="Transition state stabilizer" evidence="1">
    <location>
        <position position="126"/>
    </location>
</feature>
<feature type="glycosylation site" description="N-linked (GlcNAc...) asparagine" evidence="4">
    <location>
        <position position="202"/>
    </location>
</feature>
<feature type="disulfide bond" evidence="3">
    <location>
        <begin position="36"/>
        <end position="114"/>
    </location>
</feature>
<feature type="disulfide bond" evidence="3">
    <location>
        <begin position="62"/>
        <end position="75"/>
    </location>
</feature>
<feature type="disulfide bond" evidence="3">
    <location>
        <begin position="176"/>
        <end position="183"/>
    </location>
</feature>
<name>CUTI1_NEOFI</name>
<proteinExistence type="inferred from homology"/>
<organism>
    <name type="scientific">Neosartorya fischeri (strain ATCC 1020 / DSM 3700 / CBS 544.65 / FGSC A1164 / JCM 1740 / NRRL 181 / WB 181)</name>
    <name type="common">Aspergillus fischerianus</name>
    <dbReference type="NCBI Taxonomy" id="331117"/>
    <lineage>
        <taxon>Eukaryota</taxon>
        <taxon>Fungi</taxon>
        <taxon>Dikarya</taxon>
        <taxon>Ascomycota</taxon>
        <taxon>Pezizomycotina</taxon>
        <taxon>Eurotiomycetes</taxon>
        <taxon>Eurotiomycetidae</taxon>
        <taxon>Eurotiales</taxon>
        <taxon>Aspergillaceae</taxon>
        <taxon>Aspergillus</taxon>
        <taxon>Aspergillus subgen. Fumigati</taxon>
    </lineage>
</organism>
<sequence length="211" mass="21868">MKFALLSLAAMAVASPVAIDVRQTAIAGDELRTGPCEPITFIFARGSTEPGLLGITTGPGVCNALKLSRPGQVACQGVGPAYIADLASNFLPQGTNQIAIDEAAGLFKLAASKCPNTKIVAGGYSQGAAVMHGAIRNLPSDVQNMIKGVVLFGDTRNKQDGGRIPNFPTDRTKIYCAFGDLVCDGTLIITAAHLSYGDDVPNATSFLLSKV</sequence>